<keyword id="KW-0687">Ribonucleoprotein</keyword>
<keyword id="KW-0689">Ribosomal protein</keyword>
<accession>Q9Z7S9</accession>
<accession>Q9JQH6</accession>
<dbReference type="EMBL" id="AE001363">
    <property type="protein sequence ID" value="AAD18764.1"/>
    <property type="molecule type" value="Genomic_DNA"/>
</dbReference>
<dbReference type="EMBL" id="AE002161">
    <property type="protein sequence ID" value="AAF38005.1"/>
    <property type="molecule type" value="Genomic_DNA"/>
</dbReference>
<dbReference type="EMBL" id="BA000008">
    <property type="protein sequence ID" value="BAA98832.1"/>
    <property type="molecule type" value="Genomic_DNA"/>
</dbReference>
<dbReference type="EMBL" id="AE009440">
    <property type="protein sequence ID" value="AAP98580.1"/>
    <property type="molecule type" value="Genomic_DNA"/>
</dbReference>
<dbReference type="PIR" id="C72053">
    <property type="entry name" value="C72053"/>
</dbReference>
<dbReference type="PIR" id="F86568">
    <property type="entry name" value="F86568"/>
</dbReference>
<dbReference type="RefSeq" id="NP_224821.1">
    <property type="nucleotide sequence ID" value="NC_000922.1"/>
</dbReference>
<dbReference type="RefSeq" id="WP_010883263.1">
    <property type="nucleotide sequence ID" value="NZ_LN847257.1"/>
</dbReference>
<dbReference type="SMR" id="Q9Z7S9"/>
<dbReference type="STRING" id="406984.CPK_ORF00025"/>
<dbReference type="GeneID" id="45050675"/>
<dbReference type="KEGG" id="cpa:CP_0122"/>
<dbReference type="KEGG" id="cpj:rl17"/>
<dbReference type="KEGG" id="cpn:CPn_0625"/>
<dbReference type="KEGG" id="cpt:CpB0651"/>
<dbReference type="PATRIC" id="fig|115713.3.peg.695"/>
<dbReference type="eggNOG" id="COG0203">
    <property type="taxonomic scope" value="Bacteria"/>
</dbReference>
<dbReference type="HOGENOM" id="CLU_074407_2_0_0"/>
<dbReference type="OrthoDB" id="9809073at2"/>
<dbReference type="Proteomes" id="UP000000583">
    <property type="component" value="Chromosome"/>
</dbReference>
<dbReference type="Proteomes" id="UP000000801">
    <property type="component" value="Chromosome"/>
</dbReference>
<dbReference type="GO" id="GO:0022625">
    <property type="term" value="C:cytosolic large ribosomal subunit"/>
    <property type="evidence" value="ECO:0007669"/>
    <property type="project" value="TreeGrafter"/>
</dbReference>
<dbReference type="GO" id="GO:0003735">
    <property type="term" value="F:structural constituent of ribosome"/>
    <property type="evidence" value="ECO:0007669"/>
    <property type="project" value="InterPro"/>
</dbReference>
<dbReference type="GO" id="GO:0006412">
    <property type="term" value="P:translation"/>
    <property type="evidence" value="ECO:0007669"/>
    <property type="project" value="UniProtKB-UniRule"/>
</dbReference>
<dbReference type="FunFam" id="3.90.1030.10:FF:000003">
    <property type="entry name" value="50S ribosomal protein L17"/>
    <property type="match status" value="1"/>
</dbReference>
<dbReference type="Gene3D" id="3.90.1030.10">
    <property type="entry name" value="Ribosomal protein L17"/>
    <property type="match status" value="1"/>
</dbReference>
<dbReference type="HAMAP" id="MF_01368">
    <property type="entry name" value="Ribosomal_bL17"/>
    <property type="match status" value="1"/>
</dbReference>
<dbReference type="InterPro" id="IPR000456">
    <property type="entry name" value="Ribosomal_bL17"/>
</dbReference>
<dbReference type="InterPro" id="IPR047859">
    <property type="entry name" value="Ribosomal_bL17_CS"/>
</dbReference>
<dbReference type="InterPro" id="IPR036373">
    <property type="entry name" value="Ribosomal_bL17_sf"/>
</dbReference>
<dbReference type="NCBIfam" id="TIGR00059">
    <property type="entry name" value="L17"/>
    <property type="match status" value="1"/>
</dbReference>
<dbReference type="PANTHER" id="PTHR14413:SF16">
    <property type="entry name" value="LARGE RIBOSOMAL SUBUNIT PROTEIN BL17M"/>
    <property type="match status" value="1"/>
</dbReference>
<dbReference type="PANTHER" id="PTHR14413">
    <property type="entry name" value="RIBOSOMAL PROTEIN L17"/>
    <property type="match status" value="1"/>
</dbReference>
<dbReference type="Pfam" id="PF01196">
    <property type="entry name" value="Ribosomal_L17"/>
    <property type="match status" value="1"/>
</dbReference>
<dbReference type="SUPFAM" id="SSF64263">
    <property type="entry name" value="Prokaryotic ribosomal protein L17"/>
    <property type="match status" value="1"/>
</dbReference>
<dbReference type="PROSITE" id="PS01167">
    <property type="entry name" value="RIBOSOMAL_L17"/>
    <property type="match status" value="1"/>
</dbReference>
<reference key="1">
    <citation type="journal article" date="1999" name="Nat. Genet.">
        <title>Comparative genomes of Chlamydia pneumoniae and C. trachomatis.</title>
        <authorList>
            <person name="Kalman S."/>
            <person name="Mitchell W.P."/>
            <person name="Marathe R."/>
            <person name="Lammel C.J."/>
            <person name="Fan J."/>
            <person name="Hyman R.W."/>
            <person name="Olinger L."/>
            <person name="Grimwood J."/>
            <person name="Davis R.W."/>
            <person name="Stephens R.S."/>
        </authorList>
    </citation>
    <scope>NUCLEOTIDE SEQUENCE [LARGE SCALE GENOMIC DNA]</scope>
    <source>
        <strain>CWL029</strain>
    </source>
</reference>
<reference key="2">
    <citation type="journal article" date="2000" name="Nucleic Acids Res.">
        <title>Genome sequences of Chlamydia trachomatis MoPn and Chlamydia pneumoniae AR39.</title>
        <authorList>
            <person name="Read T.D."/>
            <person name="Brunham R.C."/>
            <person name="Shen C."/>
            <person name="Gill S.R."/>
            <person name="Heidelberg J.F."/>
            <person name="White O."/>
            <person name="Hickey E.K."/>
            <person name="Peterson J.D."/>
            <person name="Utterback T.R."/>
            <person name="Berry K.J."/>
            <person name="Bass S."/>
            <person name="Linher K.D."/>
            <person name="Weidman J.F."/>
            <person name="Khouri H.M."/>
            <person name="Craven B."/>
            <person name="Bowman C."/>
            <person name="Dodson R.J."/>
            <person name="Gwinn M.L."/>
            <person name="Nelson W.C."/>
            <person name="DeBoy R.T."/>
            <person name="Kolonay J.F."/>
            <person name="McClarty G."/>
            <person name="Salzberg S.L."/>
            <person name="Eisen J.A."/>
            <person name="Fraser C.M."/>
        </authorList>
    </citation>
    <scope>NUCLEOTIDE SEQUENCE [LARGE SCALE GENOMIC DNA]</scope>
    <source>
        <strain>AR39</strain>
    </source>
</reference>
<reference key="3">
    <citation type="journal article" date="2000" name="Nucleic Acids Res.">
        <title>Comparison of whole genome sequences of Chlamydia pneumoniae J138 from Japan and CWL029 from USA.</title>
        <authorList>
            <person name="Shirai M."/>
            <person name="Hirakawa H."/>
            <person name="Kimoto M."/>
            <person name="Tabuchi M."/>
            <person name="Kishi F."/>
            <person name="Ouchi K."/>
            <person name="Shiba T."/>
            <person name="Ishii K."/>
            <person name="Hattori M."/>
            <person name="Kuhara S."/>
            <person name="Nakazawa T."/>
        </authorList>
    </citation>
    <scope>NUCLEOTIDE SEQUENCE [LARGE SCALE GENOMIC DNA]</scope>
    <source>
        <strain>J138</strain>
    </source>
</reference>
<reference key="4">
    <citation type="submission" date="2002-05" db="EMBL/GenBank/DDBJ databases">
        <title>The genome sequence of Chlamydia pneumoniae TW183 and comparison with other Chlamydia strains based on whole genome sequence analysis.</title>
        <authorList>
            <person name="Geng M.M."/>
            <person name="Schuhmacher A."/>
            <person name="Muehldorfer I."/>
            <person name="Bensch K.W."/>
            <person name="Schaefer K.P."/>
            <person name="Schneider S."/>
            <person name="Pohl T."/>
            <person name="Essig A."/>
            <person name="Marre R."/>
            <person name="Melchers K."/>
        </authorList>
    </citation>
    <scope>NUCLEOTIDE SEQUENCE [LARGE SCALE GENOMIC DNA]</scope>
    <source>
        <strain>TW-183</strain>
    </source>
</reference>
<proteinExistence type="inferred from homology"/>
<organism>
    <name type="scientific">Chlamydia pneumoniae</name>
    <name type="common">Chlamydophila pneumoniae</name>
    <dbReference type="NCBI Taxonomy" id="83558"/>
    <lineage>
        <taxon>Bacteria</taxon>
        <taxon>Pseudomonadati</taxon>
        <taxon>Chlamydiota</taxon>
        <taxon>Chlamydiia</taxon>
        <taxon>Chlamydiales</taxon>
        <taxon>Chlamydiaceae</taxon>
        <taxon>Chlamydia/Chlamydophila group</taxon>
        <taxon>Chlamydia</taxon>
    </lineage>
</organism>
<protein>
    <recommendedName>
        <fullName evidence="1">Large ribosomal subunit protein bL17</fullName>
    </recommendedName>
    <alternativeName>
        <fullName evidence="2">50S ribosomal protein L17</fullName>
    </alternativeName>
</protein>
<gene>
    <name evidence="1" type="primary">rplQ</name>
    <name type="synonym">rl17</name>
    <name type="ordered locus">CPn_0625</name>
    <name type="ordered locus">CP_0122</name>
    <name type="ordered locus">CpB0651</name>
</gene>
<evidence type="ECO:0000255" key="1">
    <source>
        <dbReference type="HAMAP-Rule" id="MF_01368"/>
    </source>
</evidence>
<evidence type="ECO:0000305" key="2"/>
<sequence length="142" mass="16400">MQHARKKFRVGRTSSHNRCMLANMLKSLIHYERIETTLPKAKELRRHADKMITLAKKNSLAARRIAIGRLMVRYNKLTSKEARQAKGGDTSVYNVDRLVVNKLFDELGNRFVERKGGYTRILKLQNRIGDNAQKCIIEFLAS</sequence>
<name>RL17_CHLPN</name>
<feature type="chain" id="PRO_0000175521" description="Large ribosomal subunit protein bL17">
    <location>
        <begin position="1"/>
        <end position="142"/>
    </location>
</feature>
<comment type="subunit">
    <text evidence="1">Part of the 50S ribosomal subunit. Contacts protein L32.</text>
</comment>
<comment type="similarity">
    <text evidence="1">Belongs to the bacterial ribosomal protein bL17 family.</text>
</comment>